<gene>
    <name type="primary">ndufa12</name>
    <name type="ORF">DDB_G0285783</name>
</gene>
<feature type="chain" id="PRO_0000329432" description="NADH dehydrogenase [ubiquinone] 1 alpha subcomplex subunit 12">
    <location>
        <begin position="1"/>
        <end position="138"/>
    </location>
</feature>
<feature type="region of interest" description="Disordered" evidence="2">
    <location>
        <begin position="97"/>
        <end position="116"/>
    </location>
</feature>
<sequence>MTEILRYCQGIMQRGIKESIKTLYYTGELKFGTLVGVDKVGNRYYENRQEIYGRHRWVEYGDYKSNDPTTIPPEYHSWIHHVSDKLPSEMLPFSPTYKRPHIANPTGTDGAYTPPNFLFNIEKSKEELQKEEKNDNKQ</sequence>
<proteinExistence type="evidence at transcript level"/>
<protein>
    <recommendedName>
        <fullName>NADH dehydrogenase [ubiquinone] 1 alpha subcomplex subunit 12</fullName>
    </recommendedName>
</protein>
<keyword id="KW-0249">Electron transport</keyword>
<keyword id="KW-0472">Membrane</keyword>
<keyword id="KW-0496">Mitochondrion</keyword>
<keyword id="KW-0999">Mitochondrion inner membrane</keyword>
<keyword id="KW-1185">Reference proteome</keyword>
<keyword id="KW-0679">Respiratory chain</keyword>
<keyword id="KW-0813">Transport</keyword>
<name>NDUAC_DICDI</name>
<evidence type="ECO:0000250" key="1"/>
<evidence type="ECO:0000256" key="2">
    <source>
        <dbReference type="SAM" id="MobiDB-lite"/>
    </source>
</evidence>
<evidence type="ECO:0000305" key="3"/>
<reference key="1">
    <citation type="journal article" date="2005" name="Nature">
        <title>The genome of the social amoeba Dictyostelium discoideum.</title>
        <authorList>
            <person name="Eichinger L."/>
            <person name="Pachebat J.A."/>
            <person name="Gloeckner G."/>
            <person name="Rajandream M.A."/>
            <person name="Sucgang R."/>
            <person name="Berriman M."/>
            <person name="Song J."/>
            <person name="Olsen R."/>
            <person name="Szafranski K."/>
            <person name="Xu Q."/>
            <person name="Tunggal B."/>
            <person name="Kummerfeld S."/>
            <person name="Madera M."/>
            <person name="Konfortov B.A."/>
            <person name="Rivero F."/>
            <person name="Bankier A.T."/>
            <person name="Lehmann R."/>
            <person name="Hamlin N."/>
            <person name="Davies R."/>
            <person name="Gaudet P."/>
            <person name="Fey P."/>
            <person name="Pilcher K."/>
            <person name="Chen G."/>
            <person name="Saunders D."/>
            <person name="Sodergren E.J."/>
            <person name="Davis P."/>
            <person name="Kerhornou A."/>
            <person name="Nie X."/>
            <person name="Hall N."/>
            <person name="Anjard C."/>
            <person name="Hemphill L."/>
            <person name="Bason N."/>
            <person name="Farbrother P."/>
            <person name="Desany B."/>
            <person name="Just E."/>
            <person name="Morio T."/>
            <person name="Rost R."/>
            <person name="Churcher C.M."/>
            <person name="Cooper J."/>
            <person name="Haydock S."/>
            <person name="van Driessche N."/>
            <person name="Cronin A."/>
            <person name="Goodhead I."/>
            <person name="Muzny D.M."/>
            <person name="Mourier T."/>
            <person name="Pain A."/>
            <person name="Lu M."/>
            <person name="Harper D."/>
            <person name="Lindsay R."/>
            <person name="Hauser H."/>
            <person name="James K.D."/>
            <person name="Quiles M."/>
            <person name="Madan Babu M."/>
            <person name="Saito T."/>
            <person name="Buchrieser C."/>
            <person name="Wardroper A."/>
            <person name="Felder M."/>
            <person name="Thangavelu M."/>
            <person name="Johnson D."/>
            <person name="Knights A."/>
            <person name="Loulseged H."/>
            <person name="Mungall K.L."/>
            <person name="Oliver K."/>
            <person name="Price C."/>
            <person name="Quail M.A."/>
            <person name="Urushihara H."/>
            <person name="Hernandez J."/>
            <person name="Rabbinowitsch E."/>
            <person name="Steffen D."/>
            <person name="Sanders M."/>
            <person name="Ma J."/>
            <person name="Kohara Y."/>
            <person name="Sharp S."/>
            <person name="Simmonds M.N."/>
            <person name="Spiegler S."/>
            <person name="Tivey A."/>
            <person name="Sugano S."/>
            <person name="White B."/>
            <person name="Walker D."/>
            <person name="Woodward J.R."/>
            <person name="Winckler T."/>
            <person name="Tanaka Y."/>
            <person name="Shaulsky G."/>
            <person name="Schleicher M."/>
            <person name="Weinstock G.M."/>
            <person name="Rosenthal A."/>
            <person name="Cox E.C."/>
            <person name="Chisholm R.L."/>
            <person name="Gibbs R.A."/>
            <person name="Loomis W.F."/>
            <person name="Platzer M."/>
            <person name="Kay R.R."/>
            <person name="Williams J.G."/>
            <person name="Dear P.H."/>
            <person name="Noegel A.A."/>
            <person name="Barrell B.G."/>
            <person name="Kuspa A."/>
        </authorList>
    </citation>
    <scope>NUCLEOTIDE SEQUENCE [LARGE SCALE GENOMIC DNA]</scope>
    <source>
        <strain>AX4</strain>
    </source>
</reference>
<reference key="2">
    <citation type="journal article" date="2004" name="Nucleic Acids Res.">
        <title>Analyses of cDNAs from growth and slug stages of Dictyostelium discoideum.</title>
        <authorList>
            <person name="Urushihara H."/>
            <person name="Morio T."/>
            <person name="Saito T."/>
            <person name="Kohara Y."/>
            <person name="Koriki E."/>
            <person name="Ochiai H."/>
            <person name="Maeda M."/>
            <person name="Williams J.G."/>
            <person name="Takeuchi I."/>
            <person name="Tanaka Y."/>
        </authorList>
    </citation>
    <scope>NUCLEOTIDE SEQUENCE [LARGE SCALE MRNA]</scope>
    <source>
        <strain>AX4</strain>
    </source>
</reference>
<dbReference type="EMBL" id="AAFI02000079">
    <property type="protein sequence ID" value="EEU04081.1"/>
    <property type="molecule type" value="Genomic_DNA"/>
</dbReference>
<dbReference type="EMBL" id="BJ414854">
    <property type="status" value="NOT_ANNOTATED_CDS"/>
    <property type="molecule type" value="mRNA"/>
</dbReference>
<dbReference type="RefSeq" id="XP_002649133.1">
    <property type="nucleotide sequence ID" value="XM_002649087.1"/>
</dbReference>
<dbReference type="SMR" id="Q54MV7"/>
<dbReference type="FunCoup" id="Q54MV7">
    <property type="interactions" value="547"/>
</dbReference>
<dbReference type="STRING" id="44689.Q54MV7"/>
<dbReference type="PaxDb" id="44689-DDB0266466"/>
<dbReference type="EnsemblProtists" id="EEU04081">
    <property type="protein sequence ID" value="EEU04081"/>
    <property type="gene ID" value="DDB_G0285783"/>
</dbReference>
<dbReference type="GeneID" id="8625232"/>
<dbReference type="KEGG" id="ddi:DDB_G0285783"/>
<dbReference type="dictyBase" id="DDB_G0285783">
    <property type="gene designation" value="ndufa12"/>
</dbReference>
<dbReference type="VEuPathDB" id="AmoebaDB:DDB_G0285783"/>
<dbReference type="eggNOG" id="KOG3382">
    <property type="taxonomic scope" value="Eukaryota"/>
</dbReference>
<dbReference type="HOGENOM" id="CLU_110455_4_0_1"/>
<dbReference type="InParanoid" id="Q54MV7"/>
<dbReference type="OMA" id="WHGWIHH"/>
<dbReference type="PhylomeDB" id="Q54MV7"/>
<dbReference type="PRO" id="PR:Q54MV7"/>
<dbReference type="Proteomes" id="UP000002195">
    <property type="component" value="Chromosome 4"/>
</dbReference>
<dbReference type="GO" id="GO:0005743">
    <property type="term" value="C:mitochondrial inner membrane"/>
    <property type="evidence" value="ECO:0007669"/>
    <property type="project" value="UniProtKB-SubCell"/>
</dbReference>
<dbReference type="GO" id="GO:0005739">
    <property type="term" value="C:mitochondrion"/>
    <property type="evidence" value="ECO:0000250"/>
    <property type="project" value="dictyBase"/>
</dbReference>
<dbReference type="GO" id="GO:0045271">
    <property type="term" value="C:respiratory chain complex I"/>
    <property type="evidence" value="ECO:0000318"/>
    <property type="project" value="GO_Central"/>
</dbReference>
<dbReference type="InterPro" id="IPR007763">
    <property type="entry name" value="NDUFA12"/>
</dbReference>
<dbReference type="PANTHER" id="PTHR12910:SF2">
    <property type="entry name" value="NADH DEHYDROGENASE [UBIQUINONE] 1 ALPHA SUBCOMPLEX SUBUNIT 12"/>
    <property type="match status" value="1"/>
</dbReference>
<dbReference type="PANTHER" id="PTHR12910">
    <property type="entry name" value="NADH-UBIQUINONE OXIDOREDUCTASE SUBUNIT B17.2"/>
    <property type="match status" value="1"/>
</dbReference>
<dbReference type="Pfam" id="PF05071">
    <property type="entry name" value="NDUFA12"/>
    <property type="match status" value="1"/>
</dbReference>
<organism>
    <name type="scientific">Dictyostelium discoideum</name>
    <name type="common">Social amoeba</name>
    <dbReference type="NCBI Taxonomy" id="44689"/>
    <lineage>
        <taxon>Eukaryota</taxon>
        <taxon>Amoebozoa</taxon>
        <taxon>Evosea</taxon>
        <taxon>Eumycetozoa</taxon>
        <taxon>Dictyostelia</taxon>
        <taxon>Dictyosteliales</taxon>
        <taxon>Dictyosteliaceae</taxon>
        <taxon>Dictyostelium</taxon>
    </lineage>
</organism>
<accession>Q54MV7</accession>
<accession>C7G037</accession>
<accession>Q54MV8</accession>
<comment type="function">
    <text evidence="1">Accessory subunit of the mitochondrial membrane respiratory chain NADH dehydrogenase (Complex I), that is believed not to be involved in catalysis. Complex I functions in the transfer of electrons from NADH to the respiratory chain. The immediate electron acceptor for the enzyme is believed to be ubiquinone (By similarity).</text>
</comment>
<comment type="subunit">
    <text evidence="1">Complex I is composed of 45 different subunits.</text>
</comment>
<comment type="subcellular location">
    <subcellularLocation>
        <location evidence="1">Mitochondrion inner membrane</location>
        <topology evidence="1">Peripheral membrane protein</topology>
        <orientation evidence="1">Matrix side</orientation>
    </subcellularLocation>
</comment>
<comment type="similarity">
    <text evidence="3">Belongs to the complex I NDUFA12 subunit family.</text>
</comment>